<comment type="function">
    <text evidence="1">Specifically methylates position 2 of adenine 2503 in 23S rRNA and position 2 of adenine 37 in tRNAs. m2A2503 modification seems to play a crucial role in the proofreading step occurring at the peptidyl transferase center and thus would serve to optimize ribosomal fidelity.</text>
</comment>
<comment type="catalytic activity">
    <reaction evidence="1">
        <text>adenosine(2503) in 23S rRNA + 2 reduced [2Fe-2S]-[ferredoxin] + 2 S-adenosyl-L-methionine = 2-methyladenosine(2503) in 23S rRNA + 5'-deoxyadenosine + L-methionine + 2 oxidized [2Fe-2S]-[ferredoxin] + S-adenosyl-L-homocysteine</text>
        <dbReference type="Rhea" id="RHEA:42916"/>
        <dbReference type="Rhea" id="RHEA-COMP:10000"/>
        <dbReference type="Rhea" id="RHEA-COMP:10001"/>
        <dbReference type="Rhea" id="RHEA-COMP:10152"/>
        <dbReference type="Rhea" id="RHEA-COMP:10282"/>
        <dbReference type="ChEBI" id="CHEBI:17319"/>
        <dbReference type="ChEBI" id="CHEBI:33737"/>
        <dbReference type="ChEBI" id="CHEBI:33738"/>
        <dbReference type="ChEBI" id="CHEBI:57844"/>
        <dbReference type="ChEBI" id="CHEBI:57856"/>
        <dbReference type="ChEBI" id="CHEBI:59789"/>
        <dbReference type="ChEBI" id="CHEBI:74411"/>
        <dbReference type="ChEBI" id="CHEBI:74497"/>
        <dbReference type="EC" id="2.1.1.192"/>
    </reaction>
</comment>
<comment type="catalytic activity">
    <reaction evidence="1">
        <text>adenosine(37) in tRNA + 2 reduced [2Fe-2S]-[ferredoxin] + 2 S-adenosyl-L-methionine = 2-methyladenosine(37) in tRNA + 5'-deoxyadenosine + L-methionine + 2 oxidized [2Fe-2S]-[ferredoxin] + S-adenosyl-L-homocysteine</text>
        <dbReference type="Rhea" id="RHEA:43332"/>
        <dbReference type="Rhea" id="RHEA-COMP:10000"/>
        <dbReference type="Rhea" id="RHEA-COMP:10001"/>
        <dbReference type="Rhea" id="RHEA-COMP:10162"/>
        <dbReference type="Rhea" id="RHEA-COMP:10485"/>
        <dbReference type="ChEBI" id="CHEBI:17319"/>
        <dbReference type="ChEBI" id="CHEBI:33737"/>
        <dbReference type="ChEBI" id="CHEBI:33738"/>
        <dbReference type="ChEBI" id="CHEBI:57844"/>
        <dbReference type="ChEBI" id="CHEBI:57856"/>
        <dbReference type="ChEBI" id="CHEBI:59789"/>
        <dbReference type="ChEBI" id="CHEBI:74411"/>
        <dbReference type="ChEBI" id="CHEBI:74497"/>
        <dbReference type="EC" id="2.1.1.192"/>
    </reaction>
</comment>
<comment type="cofactor">
    <cofactor evidence="1">
        <name>[4Fe-4S] cluster</name>
        <dbReference type="ChEBI" id="CHEBI:49883"/>
    </cofactor>
    <text evidence="1">Binds 1 [4Fe-4S] cluster. The cluster is coordinated with 3 cysteines and an exchangeable S-adenosyl-L-methionine.</text>
</comment>
<comment type="subcellular location">
    <subcellularLocation>
        <location evidence="1">Cytoplasm</location>
    </subcellularLocation>
</comment>
<comment type="miscellaneous">
    <text evidence="1">Reaction proceeds by a ping-pong mechanism involving intermediate methylation of a conserved cysteine residue.</text>
</comment>
<comment type="similarity">
    <text evidence="1">Belongs to the radical SAM superfamily. RlmN family.</text>
</comment>
<evidence type="ECO:0000255" key="1">
    <source>
        <dbReference type="HAMAP-Rule" id="MF_01849"/>
    </source>
</evidence>
<evidence type="ECO:0000255" key="2">
    <source>
        <dbReference type="PROSITE-ProRule" id="PRU01266"/>
    </source>
</evidence>
<protein>
    <recommendedName>
        <fullName evidence="1">Dual-specificity RNA methyltransferase RlmN</fullName>
        <ecNumber evidence="1">2.1.1.192</ecNumber>
    </recommendedName>
    <alternativeName>
        <fullName evidence="1">23S rRNA (adenine(2503)-C(2))-methyltransferase</fullName>
    </alternativeName>
    <alternativeName>
        <fullName evidence="1">23S rRNA m2A2503 methyltransferase</fullName>
    </alternativeName>
    <alternativeName>
        <fullName evidence="1">Ribosomal RNA large subunit methyltransferase N</fullName>
    </alternativeName>
    <alternativeName>
        <fullName evidence="1">tRNA (adenine(37)-C(2))-methyltransferase</fullName>
    </alternativeName>
    <alternativeName>
        <fullName evidence="1">tRNA m2A37 methyltransferase</fullName>
    </alternativeName>
</protein>
<gene>
    <name evidence="1" type="primary">rlmN</name>
    <name type="ordered locus">ECED1_2948</name>
</gene>
<feature type="chain" id="PRO_1000188573" description="Dual-specificity RNA methyltransferase RlmN">
    <location>
        <begin position="1"/>
        <end position="384"/>
    </location>
</feature>
<feature type="domain" description="Radical SAM core" evidence="2">
    <location>
        <begin position="111"/>
        <end position="350"/>
    </location>
</feature>
<feature type="active site" description="Proton acceptor" evidence="1">
    <location>
        <position position="105"/>
    </location>
</feature>
<feature type="active site" description="S-methylcysteine intermediate" evidence="1">
    <location>
        <position position="355"/>
    </location>
</feature>
<feature type="binding site" evidence="1">
    <location>
        <position position="125"/>
    </location>
    <ligand>
        <name>[4Fe-4S] cluster</name>
        <dbReference type="ChEBI" id="CHEBI:49883"/>
        <note>4Fe-4S-S-AdoMet</note>
    </ligand>
</feature>
<feature type="binding site" evidence="1">
    <location>
        <position position="129"/>
    </location>
    <ligand>
        <name>[4Fe-4S] cluster</name>
        <dbReference type="ChEBI" id="CHEBI:49883"/>
        <note>4Fe-4S-S-AdoMet</note>
    </ligand>
</feature>
<feature type="binding site" evidence="1">
    <location>
        <position position="132"/>
    </location>
    <ligand>
        <name>[4Fe-4S] cluster</name>
        <dbReference type="ChEBI" id="CHEBI:49883"/>
        <note>4Fe-4S-S-AdoMet</note>
    </ligand>
</feature>
<feature type="binding site" evidence="1">
    <location>
        <begin position="179"/>
        <end position="180"/>
    </location>
    <ligand>
        <name>S-adenosyl-L-methionine</name>
        <dbReference type="ChEBI" id="CHEBI:59789"/>
    </ligand>
</feature>
<feature type="binding site" evidence="1">
    <location>
        <position position="211"/>
    </location>
    <ligand>
        <name>S-adenosyl-L-methionine</name>
        <dbReference type="ChEBI" id="CHEBI:59789"/>
    </ligand>
</feature>
<feature type="binding site" evidence="1">
    <location>
        <begin position="233"/>
        <end position="235"/>
    </location>
    <ligand>
        <name>S-adenosyl-L-methionine</name>
        <dbReference type="ChEBI" id="CHEBI:59789"/>
    </ligand>
</feature>
<feature type="binding site" evidence="1">
    <location>
        <position position="312"/>
    </location>
    <ligand>
        <name>S-adenosyl-L-methionine</name>
        <dbReference type="ChEBI" id="CHEBI:59789"/>
    </ligand>
</feature>
<feature type="disulfide bond" description="(transient)" evidence="1">
    <location>
        <begin position="118"/>
        <end position="355"/>
    </location>
</feature>
<sequence length="384" mass="43086">MSEQLVTPENVTTKDGKINLLDLNRQQMREFFKDLGEKPFRADQVMKWMYHYCCDNFDEMTDINKVLRGKLKEVAEIRAPEVVEEQRSSDGTIKWAIAVGDQRVETVYIPEDDRATLCVSSQVGCALECKFCSTAQQGFNRNLRVSEIIGQVWRAAKIVGAAKVTGQRPITNVVMMGMGEPLLNLNNVVPAMEIMLDDFGFGLSKRRVTLSTSGVVPALDKLGDMIDVALAISLHAPNDEIRDEIVPINKKYNIETFLAAVRRYLEKSNANQGRVTIEYVMLDHVNDGTEHAHQLAELLKDTPCKINLIPWNPFPGAPYGRSSNSRIDRFSKVLMSYGFTTIVRKTRGDDIDAACGQLAGDVIDRTKRTLRKRMQGEAIDIKAV</sequence>
<reference key="1">
    <citation type="journal article" date="2009" name="PLoS Genet.">
        <title>Organised genome dynamics in the Escherichia coli species results in highly diverse adaptive paths.</title>
        <authorList>
            <person name="Touchon M."/>
            <person name="Hoede C."/>
            <person name="Tenaillon O."/>
            <person name="Barbe V."/>
            <person name="Baeriswyl S."/>
            <person name="Bidet P."/>
            <person name="Bingen E."/>
            <person name="Bonacorsi S."/>
            <person name="Bouchier C."/>
            <person name="Bouvet O."/>
            <person name="Calteau A."/>
            <person name="Chiapello H."/>
            <person name="Clermont O."/>
            <person name="Cruveiller S."/>
            <person name="Danchin A."/>
            <person name="Diard M."/>
            <person name="Dossat C."/>
            <person name="Karoui M.E."/>
            <person name="Frapy E."/>
            <person name="Garry L."/>
            <person name="Ghigo J.M."/>
            <person name="Gilles A.M."/>
            <person name="Johnson J."/>
            <person name="Le Bouguenec C."/>
            <person name="Lescat M."/>
            <person name="Mangenot S."/>
            <person name="Martinez-Jehanne V."/>
            <person name="Matic I."/>
            <person name="Nassif X."/>
            <person name="Oztas S."/>
            <person name="Petit M.A."/>
            <person name="Pichon C."/>
            <person name="Rouy Z."/>
            <person name="Ruf C.S."/>
            <person name="Schneider D."/>
            <person name="Tourret J."/>
            <person name="Vacherie B."/>
            <person name="Vallenet D."/>
            <person name="Medigue C."/>
            <person name="Rocha E.P.C."/>
            <person name="Denamur E."/>
        </authorList>
    </citation>
    <scope>NUCLEOTIDE SEQUENCE [LARGE SCALE GENOMIC DNA]</scope>
    <source>
        <strain>ED1a</strain>
    </source>
</reference>
<accession>B7N304</accession>
<proteinExistence type="inferred from homology"/>
<keyword id="KW-0004">4Fe-4S</keyword>
<keyword id="KW-0963">Cytoplasm</keyword>
<keyword id="KW-1015">Disulfide bond</keyword>
<keyword id="KW-0408">Iron</keyword>
<keyword id="KW-0411">Iron-sulfur</keyword>
<keyword id="KW-0479">Metal-binding</keyword>
<keyword id="KW-0489">Methyltransferase</keyword>
<keyword id="KW-0698">rRNA processing</keyword>
<keyword id="KW-0949">S-adenosyl-L-methionine</keyword>
<keyword id="KW-0808">Transferase</keyword>
<keyword id="KW-0819">tRNA processing</keyword>
<organism>
    <name type="scientific">Escherichia coli O81 (strain ED1a)</name>
    <dbReference type="NCBI Taxonomy" id="585397"/>
    <lineage>
        <taxon>Bacteria</taxon>
        <taxon>Pseudomonadati</taxon>
        <taxon>Pseudomonadota</taxon>
        <taxon>Gammaproteobacteria</taxon>
        <taxon>Enterobacterales</taxon>
        <taxon>Enterobacteriaceae</taxon>
        <taxon>Escherichia</taxon>
    </lineage>
</organism>
<name>RLMN_ECO81</name>
<dbReference type="EC" id="2.1.1.192" evidence="1"/>
<dbReference type="EMBL" id="CU928162">
    <property type="protein sequence ID" value="CAV17847.1"/>
    <property type="molecule type" value="Genomic_DNA"/>
</dbReference>
<dbReference type="RefSeq" id="WP_000003317.1">
    <property type="nucleotide sequence ID" value="NC_011745.1"/>
</dbReference>
<dbReference type="SMR" id="B7N304"/>
<dbReference type="KEGG" id="ecq:ECED1_2948"/>
<dbReference type="HOGENOM" id="CLU_029101_0_0_6"/>
<dbReference type="Proteomes" id="UP000000748">
    <property type="component" value="Chromosome"/>
</dbReference>
<dbReference type="GO" id="GO:0005737">
    <property type="term" value="C:cytoplasm"/>
    <property type="evidence" value="ECO:0007669"/>
    <property type="project" value="UniProtKB-SubCell"/>
</dbReference>
<dbReference type="GO" id="GO:0051539">
    <property type="term" value="F:4 iron, 4 sulfur cluster binding"/>
    <property type="evidence" value="ECO:0007669"/>
    <property type="project" value="UniProtKB-UniRule"/>
</dbReference>
<dbReference type="GO" id="GO:0046872">
    <property type="term" value="F:metal ion binding"/>
    <property type="evidence" value="ECO:0007669"/>
    <property type="project" value="UniProtKB-KW"/>
</dbReference>
<dbReference type="GO" id="GO:0070040">
    <property type="term" value="F:rRNA (adenine(2503)-C2-)-methyltransferase activity"/>
    <property type="evidence" value="ECO:0007669"/>
    <property type="project" value="UniProtKB-UniRule"/>
</dbReference>
<dbReference type="GO" id="GO:0019843">
    <property type="term" value="F:rRNA binding"/>
    <property type="evidence" value="ECO:0007669"/>
    <property type="project" value="UniProtKB-UniRule"/>
</dbReference>
<dbReference type="GO" id="GO:0002935">
    <property type="term" value="F:tRNA (adenine(37)-C2)-methyltransferase activity"/>
    <property type="evidence" value="ECO:0007669"/>
    <property type="project" value="UniProtKB-UniRule"/>
</dbReference>
<dbReference type="GO" id="GO:0000049">
    <property type="term" value="F:tRNA binding"/>
    <property type="evidence" value="ECO:0007669"/>
    <property type="project" value="UniProtKB-UniRule"/>
</dbReference>
<dbReference type="GO" id="GO:0070475">
    <property type="term" value="P:rRNA base methylation"/>
    <property type="evidence" value="ECO:0007669"/>
    <property type="project" value="UniProtKB-UniRule"/>
</dbReference>
<dbReference type="GO" id="GO:0030488">
    <property type="term" value="P:tRNA methylation"/>
    <property type="evidence" value="ECO:0007669"/>
    <property type="project" value="UniProtKB-UniRule"/>
</dbReference>
<dbReference type="CDD" id="cd01335">
    <property type="entry name" value="Radical_SAM"/>
    <property type="match status" value="1"/>
</dbReference>
<dbReference type="FunFam" id="1.10.150.530:FF:000001">
    <property type="entry name" value="Dual-specificity RNA methyltransferase RlmN"/>
    <property type="match status" value="1"/>
</dbReference>
<dbReference type="FunFam" id="3.20.20.70:FF:000008">
    <property type="entry name" value="Dual-specificity RNA methyltransferase RlmN"/>
    <property type="match status" value="1"/>
</dbReference>
<dbReference type="Gene3D" id="1.10.150.530">
    <property type="match status" value="1"/>
</dbReference>
<dbReference type="Gene3D" id="3.20.20.70">
    <property type="entry name" value="Aldolase class I"/>
    <property type="match status" value="1"/>
</dbReference>
<dbReference type="HAMAP" id="MF_01849">
    <property type="entry name" value="RNA_methyltr_RlmN"/>
    <property type="match status" value="1"/>
</dbReference>
<dbReference type="InterPro" id="IPR013785">
    <property type="entry name" value="Aldolase_TIM"/>
</dbReference>
<dbReference type="InterPro" id="IPR040072">
    <property type="entry name" value="Methyltransferase_A"/>
</dbReference>
<dbReference type="InterPro" id="IPR048641">
    <property type="entry name" value="RlmN_N"/>
</dbReference>
<dbReference type="InterPro" id="IPR027492">
    <property type="entry name" value="RNA_MTrfase_RlmN"/>
</dbReference>
<dbReference type="InterPro" id="IPR004383">
    <property type="entry name" value="rRNA_lsu_MTrfase_RlmN/Cfr"/>
</dbReference>
<dbReference type="InterPro" id="IPR007197">
    <property type="entry name" value="rSAM"/>
</dbReference>
<dbReference type="NCBIfam" id="NF008396">
    <property type="entry name" value="PRK11194.1"/>
    <property type="match status" value="1"/>
</dbReference>
<dbReference type="NCBIfam" id="TIGR00048">
    <property type="entry name" value="rRNA_mod_RlmN"/>
    <property type="match status" value="1"/>
</dbReference>
<dbReference type="PANTHER" id="PTHR30544">
    <property type="entry name" value="23S RRNA METHYLTRANSFERASE"/>
    <property type="match status" value="1"/>
</dbReference>
<dbReference type="PANTHER" id="PTHR30544:SF5">
    <property type="entry name" value="RADICAL SAM CORE DOMAIN-CONTAINING PROTEIN"/>
    <property type="match status" value="1"/>
</dbReference>
<dbReference type="Pfam" id="PF04055">
    <property type="entry name" value="Radical_SAM"/>
    <property type="match status" value="1"/>
</dbReference>
<dbReference type="Pfam" id="PF21016">
    <property type="entry name" value="RlmN_N"/>
    <property type="match status" value="1"/>
</dbReference>
<dbReference type="PIRSF" id="PIRSF006004">
    <property type="entry name" value="CHP00048"/>
    <property type="match status" value="1"/>
</dbReference>
<dbReference type="SFLD" id="SFLDF00275">
    <property type="entry name" value="adenosine_C2_methyltransferase"/>
    <property type="match status" value="1"/>
</dbReference>
<dbReference type="SFLD" id="SFLDG01062">
    <property type="entry name" value="methyltransferase_(Class_A)"/>
    <property type="match status" value="1"/>
</dbReference>
<dbReference type="SUPFAM" id="SSF102114">
    <property type="entry name" value="Radical SAM enzymes"/>
    <property type="match status" value="1"/>
</dbReference>
<dbReference type="PROSITE" id="PS51918">
    <property type="entry name" value="RADICAL_SAM"/>
    <property type="match status" value="1"/>
</dbReference>